<name>NADD_BACC2</name>
<reference key="1">
    <citation type="submission" date="2008-10" db="EMBL/GenBank/DDBJ databases">
        <title>Genome sequence of Bacillus cereus G9842.</title>
        <authorList>
            <person name="Dodson R.J."/>
            <person name="Durkin A.S."/>
            <person name="Rosovitz M.J."/>
            <person name="Rasko D.A."/>
            <person name="Hoffmaster A."/>
            <person name="Ravel J."/>
            <person name="Sutton G."/>
        </authorList>
    </citation>
    <scope>NUCLEOTIDE SEQUENCE [LARGE SCALE GENOMIC DNA]</scope>
    <source>
        <strain>G9842</strain>
    </source>
</reference>
<sequence length="189" mass="22032">MRKIGIIGGTFDPPHYGHLLIANEVYHALDLEEVWFLPNQIPPHKQGRNITSIERRLHMLELATEAEEHFSICLEELSRKGPSYTYDTMLQLTKKYPDVQFHFIIGGDMVEYLPKWYNIEALLNLVTFVGVARPGYTLHTPYQITTVEIPEFAVSSSLLRERYKEKKTCKYLLPEKVQVYIERNGLYES</sequence>
<comment type="function">
    <text evidence="1">Catalyzes the reversible adenylation of nicotinate mononucleotide (NaMN) to nicotinic acid adenine dinucleotide (NaAD).</text>
</comment>
<comment type="catalytic activity">
    <reaction evidence="1">
        <text>nicotinate beta-D-ribonucleotide + ATP + H(+) = deamido-NAD(+) + diphosphate</text>
        <dbReference type="Rhea" id="RHEA:22860"/>
        <dbReference type="ChEBI" id="CHEBI:15378"/>
        <dbReference type="ChEBI" id="CHEBI:30616"/>
        <dbReference type="ChEBI" id="CHEBI:33019"/>
        <dbReference type="ChEBI" id="CHEBI:57502"/>
        <dbReference type="ChEBI" id="CHEBI:58437"/>
        <dbReference type="EC" id="2.7.7.18"/>
    </reaction>
</comment>
<comment type="pathway">
    <text evidence="1">Cofactor biosynthesis; NAD(+) biosynthesis; deamido-NAD(+) from nicotinate D-ribonucleotide: step 1/1.</text>
</comment>
<comment type="similarity">
    <text evidence="1">Belongs to the NadD family.</text>
</comment>
<keyword id="KW-0067">ATP-binding</keyword>
<keyword id="KW-0520">NAD</keyword>
<keyword id="KW-0547">Nucleotide-binding</keyword>
<keyword id="KW-0548">Nucleotidyltransferase</keyword>
<keyword id="KW-0662">Pyridine nucleotide biosynthesis</keyword>
<keyword id="KW-0808">Transferase</keyword>
<proteinExistence type="inferred from homology"/>
<organism>
    <name type="scientific">Bacillus cereus (strain G9842)</name>
    <dbReference type="NCBI Taxonomy" id="405531"/>
    <lineage>
        <taxon>Bacteria</taxon>
        <taxon>Bacillati</taxon>
        <taxon>Bacillota</taxon>
        <taxon>Bacilli</taxon>
        <taxon>Bacillales</taxon>
        <taxon>Bacillaceae</taxon>
        <taxon>Bacillus</taxon>
        <taxon>Bacillus cereus group</taxon>
    </lineage>
</organism>
<gene>
    <name evidence="1" type="primary">nadD</name>
    <name type="ordered locus">BCG9842_B0785</name>
</gene>
<evidence type="ECO:0000255" key="1">
    <source>
        <dbReference type="HAMAP-Rule" id="MF_00244"/>
    </source>
</evidence>
<dbReference type="EC" id="2.7.7.18" evidence="1"/>
<dbReference type="EMBL" id="CP001186">
    <property type="protein sequence ID" value="ACK95938.1"/>
    <property type="molecule type" value="Genomic_DNA"/>
</dbReference>
<dbReference type="RefSeq" id="WP_001226031.1">
    <property type="nucleotide sequence ID" value="NC_011772.1"/>
</dbReference>
<dbReference type="SMR" id="B7IYI5"/>
<dbReference type="KEGG" id="bcg:BCG9842_B0785"/>
<dbReference type="HOGENOM" id="CLU_069765_3_1_9"/>
<dbReference type="UniPathway" id="UPA00253">
    <property type="reaction ID" value="UER00332"/>
</dbReference>
<dbReference type="Proteomes" id="UP000006744">
    <property type="component" value="Chromosome"/>
</dbReference>
<dbReference type="GO" id="GO:0005524">
    <property type="term" value="F:ATP binding"/>
    <property type="evidence" value="ECO:0007669"/>
    <property type="project" value="UniProtKB-KW"/>
</dbReference>
<dbReference type="GO" id="GO:0004515">
    <property type="term" value="F:nicotinate-nucleotide adenylyltransferase activity"/>
    <property type="evidence" value="ECO:0007669"/>
    <property type="project" value="UniProtKB-UniRule"/>
</dbReference>
<dbReference type="GO" id="GO:0009435">
    <property type="term" value="P:NAD biosynthetic process"/>
    <property type="evidence" value="ECO:0007669"/>
    <property type="project" value="UniProtKB-UniRule"/>
</dbReference>
<dbReference type="CDD" id="cd02165">
    <property type="entry name" value="NMNAT"/>
    <property type="match status" value="1"/>
</dbReference>
<dbReference type="FunFam" id="3.40.50.620:FF:000079">
    <property type="entry name" value="Probable nicotinate-nucleotide adenylyltransferase"/>
    <property type="match status" value="1"/>
</dbReference>
<dbReference type="Gene3D" id="3.40.50.620">
    <property type="entry name" value="HUPs"/>
    <property type="match status" value="1"/>
</dbReference>
<dbReference type="HAMAP" id="MF_00244">
    <property type="entry name" value="NaMN_adenylyltr"/>
    <property type="match status" value="1"/>
</dbReference>
<dbReference type="InterPro" id="IPR004821">
    <property type="entry name" value="Cyt_trans-like"/>
</dbReference>
<dbReference type="InterPro" id="IPR005248">
    <property type="entry name" value="NadD/NMNAT"/>
</dbReference>
<dbReference type="InterPro" id="IPR014729">
    <property type="entry name" value="Rossmann-like_a/b/a_fold"/>
</dbReference>
<dbReference type="NCBIfam" id="TIGR00125">
    <property type="entry name" value="cyt_tran_rel"/>
    <property type="match status" value="1"/>
</dbReference>
<dbReference type="NCBIfam" id="TIGR00482">
    <property type="entry name" value="nicotinate (nicotinamide) nucleotide adenylyltransferase"/>
    <property type="match status" value="1"/>
</dbReference>
<dbReference type="NCBIfam" id="NF000840">
    <property type="entry name" value="PRK00071.1-3"/>
    <property type="match status" value="1"/>
</dbReference>
<dbReference type="NCBIfam" id="NF000841">
    <property type="entry name" value="PRK00071.1-4"/>
    <property type="match status" value="1"/>
</dbReference>
<dbReference type="PANTHER" id="PTHR39321">
    <property type="entry name" value="NICOTINATE-NUCLEOTIDE ADENYLYLTRANSFERASE-RELATED"/>
    <property type="match status" value="1"/>
</dbReference>
<dbReference type="PANTHER" id="PTHR39321:SF3">
    <property type="entry name" value="PHOSPHOPANTETHEINE ADENYLYLTRANSFERASE"/>
    <property type="match status" value="1"/>
</dbReference>
<dbReference type="Pfam" id="PF01467">
    <property type="entry name" value="CTP_transf_like"/>
    <property type="match status" value="1"/>
</dbReference>
<dbReference type="SUPFAM" id="SSF52374">
    <property type="entry name" value="Nucleotidylyl transferase"/>
    <property type="match status" value="1"/>
</dbReference>
<accession>B7IYI5</accession>
<protein>
    <recommendedName>
        <fullName evidence="1">Probable nicotinate-nucleotide adenylyltransferase</fullName>
        <ecNumber evidence="1">2.7.7.18</ecNumber>
    </recommendedName>
    <alternativeName>
        <fullName evidence="1">Deamido-NAD(+) diphosphorylase</fullName>
    </alternativeName>
    <alternativeName>
        <fullName evidence="1">Deamido-NAD(+) pyrophosphorylase</fullName>
    </alternativeName>
    <alternativeName>
        <fullName evidence="1">Nicotinate mononucleotide adenylyltransferase</fullName>
        <shortName evidence="1">NaMN adenylyltransferase</shortName>
    </alternativeName>
</protein>
<feature type="chain" id="PRO_1000192229" description="Probable nicotinate-nucleotide adenylyltransferase">
    <location>
        <begin position="1"/>
        <end position="189"/>
    </location>
</feature>